<keyword id="KW-0066">ATP synthesis</keyword>
<keyword id="KW-0067">ATP-binding</keyword>
<keyword id="KW-0375">Hydrogen ion transport</keyword>
<keyword id="KW-0406">Ion transport</keyword>
<keyword id="KW-0547">Nucleotide-binding</keyword>
<keyword id="KW-1278">Translocase</keyword>
<keyword id="KW-0813">Transport</keyword>
<protein>
    <recommendedName>
        <fullName evidence="1">V-type ATP synthase alpha chain</fullName>
        <ecNumber evidence="1">7.1.2.2</ecNumber>
    </recommendedName>
    <alternativeName>
        <fullName evidence="1">V-ATPase subunit A</fullName>
    </alternativeName>
</protein>
<gene>
    <name evidence="1" type="primary">atpA</name>
    <name type="ordered locus">CLB_2567</name>
</gene>
<comment type="function">
    <text evidence="1">Produces ATP from ADP in the presence of a proton gradient across the membrane. The V-type alpha chain is a catalytic subunit.</text>
</comment>
<comment type="catalytic activity">
    <reaction evidence="1">
        <text>ATP + H2O + 4 H(+)(in) = ADP + phosphate + 5 H(+)(out)</text>
        <dbReference type="Rhea" id="RHEA:57720"/>
        <dbReference type="ChEBI" id="CHEBI:15377"/>
        <dbReference type="ChEBI" id="CHEBI:15378"/>
        <dbReference type="ChEBI" id="CHEBI:30616"/>
        <dbReference type="ChEBI" id="CHEBI:43474"/>
        <dbReference type="ChEBI" id="CHEBI:456216"/>
        <dbReference type="EC" id="7.1.2.2"/>
    </reaction>
</comment>
<comment type="similarity">
    <text evidence="1">Belongs to the ATPase alpha/beta chains family.</text>
</comment>
<comment type="sequence caution" evidence="2">
    <conflict type="erroneous initiation">
        <sequence resource="EMBL-CDS" id="ABS33811"/>
    </conflict>
</comment>
<name>VATA_CLOB1</name>
<dbReference type="EC" id="7.1.2.2" evidence="1"/>
<dbReference type="EMBL" id="CP000726">
    <property type="protein sequence ID" value="ABS33811.1"/>
    <property type="status" value="ALT_INIT"/>
    <property type="molecule type" value="Genomic_DNA"/>
</dbReference>
<dbReference type="RefSeq" id="WP_033047490.1">
    <property type="nucleotide sequence ID" value="NC_009697.1"/>
</dbReference>
<dbReference type="SMR" id="A7FWQ7"/>
<dbReference type="KEGG" id="cba:CLB_2567"/>
<dbReference type="HOGENOM" id="CLU_008162_3_1_9"/>
<dbReference type="GO" id="GO:0045259">
    <property type="term" value="C:proton-transporting ATP synthase complex"/>
    <property type="evidence" value="ECO:0007669"/>
    <property type="project" value="UniProtKB-ARBA"/>
</dbReference>
<dbReference type="GO" id="GO:0005524">
    <property type="term" value="F:ATP binding"/>
    <property type="evidence" value="ECO:0007669"/>
    <property type="project" value="UniProtKB-UniRule"/>
</dbReference>
<dbReference type="GO" id="GO:0046933">
    <property type="term" value="F:proton-transporting ATP synthase activity, rotational mechanism"/>
    <property type="evidence" value="ECO:0007669"/>
    <property type="project" value="UniProtKB-UniRule"/>
</dbReference>
<dbReference type="GO" id="GO:0046961">
    <property type="term" value="F:proton-transporting ATPase activity, rotational mechanism"/>
    <property type="evidence" value="ECO:0007669"/>
    <property type="project" value="InterPro"/>
</dbReference>
<dbReference type="GO" id="GO:0042777">
    <property type="term" value="P:proton motive force-driven plasma membrane ATP synthesis"/>
    <property type="evidence" value="ECO:0007669"/>
    <property type="project" value="UniProtKB-UniRule"/>
</dbReference>
<dbReference type="CDD" id="cd18111">
    <property type="entry name" value="ATP-synt_V_A-type_alpha_C"/>
    <property type="match status" value="1"/>
</dbReference>
<dbReference type="CDD" id="cd18119">
    <property type="entry name" value="ATP-synt_V_A-type_alpha_N"/>
    <property type="match status" value="1"/>
</dbReference>
<dbReference type="CDD" id="cd01134">
    <property type="entry name" value="V_A-ATPase_A"/>
    <property type="match status" value="1"/>
</dbReference>
<dbReference type="FunFam" id="3.40.50.300:FF:000675">
    <property type="entry name" value="V-type ATP synthase alpha chain"/>
    <property type="match status" value="1"/>
</dbReference>
<dbReference type="FunFam" id="1.10.1140.10:FF:000002">
    <property type="entry name" value="V-type proton ATPase catalytic subunit A"/>
    <property type="match status" value="1"/>
</dbReference>
<dbReference type="FunFam" id="2.40.30.20:FF:000002">
    <property type="entry name" value="V-type proton ATPase catalytic subunit A"/>
    <property type="match status" value="1"/>
</dbReference>
<dbReference type="FunFam" id="2.40.50.100:FF:000008">
    <property type="entry name" value="V-type proton ATPase catalytic subunit A"/>
    <property type="match status" value="1"/>
</dbReference>
<dbReference type="Gene3D" id="2.40.30.20">
    <property type="match status" value="1"/>
</dbReference>
<dbReference type="Gene3D" id="2.40.50.100">
    <property type="match status" value="1"/>
</dbReference>
<dbReference type="Gene3D" id="1.10.1140.10">
    <property type="entry name" value="Bovine Mitochondrial F1-atpase, Atp Synthase Beta Chain, Chain D, domain 3"/>
    <property type="match status" value="1"/>
</dbReference>
<dbReference type="Gene3D" id="3.40.50.300">
    <property type="entry name" value="P-loop containing nucleotide triphosphate hydrolases"/>
    <property type="match status" value="1"/>
</dbReference>
<dbReference type="HAMAP" id="MF_00309">
    <property type="entry name" value="ATP_synth_A_arch"/>
    <property type="match status" value="1"/>
</dbReference>
<dbReference type="InterPro" id="IPR055190">
    <property type="entry name" value="ATP-synt_VA_C"/>
</dbReference>
<dbReference type="InterPro" id="IPR031686">
    <property type="entry name" value="ATP-synth_a_Xtn"/>
</dbReference>
<dbReference type="InterPro" id="IPR023366">
    <property type="entry name" value="ATP_synth_asu-like_sf"/>
</dbReference>
<dbReference type="InterPro" id="IPR020003">
    <property type="entry name" value="ATPase_a/bsu_AS"/>
</dbReference>
<dbReference type="InterPro" id="IPR004100">
    <property type="entry name" value="ATPase_F1/V1/A1_a/bsu_N"/>
</dbReference>
<dbReference type="InterPro" id="IPR036121">
    <property type="entry name" value="ATPase_F1/V1/A1_a/bsu_N_sf"/>
</dbReference>
<dbReference type="InterPro" id="IPR000194">
    <property type="entry name" value="ATPase_F1/V1/A1_a/bsu_nucl-bd"/>
</dbReference>
<dbReference type="InterPro" id="IPR024034">
    <property type="entry name" value="ATPase_F1/V1_b/a_C"/>
</dbReference>
<dbReference type="InterPro" id="IPR027417">
    <property type="entry name" value="P-loop_NTPase"/>
</dbReference>
<dbReference type="InterPro" id="IPR022878">
    <property type="entry name" value="V-ATPase_asu"/>
</dbReference>
<dbReference type="NCBIfam" id="NF003220">
    <property type="entry name" value="PRK04192.1"/>
    <property type="match status" value="1"/>
</dbReference>
<dbReference type="PANTHER" id="PTHR43607:SF1">
    <property type="entry name" value="H(+)-TRANSPORTING TWO-SECTOR ATPASE"/>
    <property type="match status" value="1"/>
</dbReference>
<dbReference type="PANTHER" id="PTHR43607">
    <property type="entry name" value="V-TYPE PROTON ATPASE CATALYTIC SUBUNIT A"/>
    <property type="match status" value="1"/>
</dbReference>
<dbReference type="Pfam" id="PF00006">
    <property type="entry name" value="ATP-synt_ab"/>
    <property type="match status" value="1"/>
</dbReference>
<dbReference type="Pfam" id="PF02874">
    <property type="entry name" value="ATP-synt_ab_N"/>
    <property type="match status" value="1"/>
</dbReference>
<dbReference type="Pfam" id="PF16886">
    <property type="entry name" value="ATP-synt_ab_Xtn"/>
    <property type="match status" value="1"/>
</dbReference>
<dbReference type="Pfam" id="PF22919">
    <property type="entry name" value="ATP-synt_VA_C"/>
    <property type="match status" value="1"/>
</dbReference>
<dbReference type="SUPFAM" id="SSF47917">
    <property type="entry name" value="C-terminal domain of alpha and beta subunits of F1 ATP synthase"/>
    <property type="match status" value="1"/>
</dbReference>
<dbReference type="SUPFAM" id="SSF50615">
    <property type="entry name" value="N-terminal domain of alpha and beta subunits of F1 ATP synthase"/>
    <property type="match status" value="1"/>
</dbReference>
<dbReference type="SUPFAM" id="SSF52540">
    <property type="entry name" value="P-loop containing nucleoside triphosphate hydrolases"/>
    <property type="match status" value="1"/>
</dbReference>
<dbReference type="PROSITE" id="PS00152">
    <property type="entry name" value="ATPASE_ALPHA_BETA"/>
    <property type="match status" value="1"/>
</dbReference>
<sequence length="590" mass="65396">MKTGRVLKISGPLVVAEGMEEANIYDVVKVGEKRLIGEIIEMREDRASIQVYEETAGLAPGDPVITTGEPLSVELGPGLIEAMFDGIQRPLNAIKAKAGDFITKGVEVHSLDRDKKWHFTPVKKVGDTVEAGDVIGIVQETSIVEHKIMVPYGIKGTIETIEEGDFTVVDTVAKVKDKDKVSDLMMMQKWPVRRGRPYGRKLNPAQPMITGQRVIDTFFPVTKGGTACVPGPFGSGKTVVQHQLAKWADAQIVVYIGCGERGNEMTDVLNEFPELKDPKTGEPLMKRTVLIANTSNMPVAAREASIYTGITIGEYFRDMGYSIALMADSTSRWAEALREMSGRLEEMPGDEGYPAYLGSRAAEFYERAGNVVSIGSEEREGALTVIGAVSPPGGDLSEPVTQATLRIVKVFWGLDAQLAYRRHFPAINWLNSYSLYIEKISPWMDENVASDWTALRIKAMSLLQEEASLEEIVRLVGIDALSEKDRLKLEVAKSLREDYLQQNAFHEVDTYASLGKQYKMLKLVLFFYDEAQRALNAGVYLKELLDLEVRDKIARAKYISEENIENIDAIFNELSEVIDQLISKGGIMNA</sequence>
<reference key="1">
    <citation type="journal article" date="2007" name="PLoS ONE">
        <title>Analysis of the neurotoxin complex genes in Clostridium botulinum A1-A4 and B1 strains: BoNT/A3, /Ba4 and /B1 clusters are located within plasmids.</title>
        <authorList>
            <person name="Smith T.J."/>
            <person name="Hill K.K."/>
            <person name="Foley B.T."/>
            <person name="Detter J.C."/>
            <person name="Munk A.C."/>
            <person name="Bruce D.C."/>
            <person name="Doggett N.A."/>
            <person name="Smith L.A."/>
            <person name="Marks J.D."/>
            <person name="Xie G."/>
            <person name="Brettin T.S."/>
        </authorList>
    </citation>
    <scope>NUCLEOTIDE SEQUENCE [LARGE SCALE GENOMIC DNA]</scope>
    <source>
        <strain>ATCC 19397 / Type A</strain>
    </source>
</reference>
<accession>A7FWQ7</accession>
<feature type="chain" id="PRO_0000322460" description="V-type ATP synthase alpha chain">
    <location>
        <begin position="1"/>
        <end position="590"/>
    </location>
</feature>
<feature type="binding site" evidence="1">
    <location>
        <begin position="231"/>
        <end position="238"/>
    </location>
    <ligand>
        <name>ATP</name>
        <dbReference type="ChEBI" id="CHEBI:30616"/>
    </ligand>
</feature>
<organism>
    <name type="scientific">Clostridium botulinum (strain ATCC 19397 / Type A)</name>
    <dbReference type="NCBI Taxonomy" id="441770"/>
    <lineage>
        <taxon>Bacteria</taxon>
        <taxon>Bacillati</taxon>
        <taxon>Bacillota</taxon>
        <taxon>Clostridia</taxon>
        <taxon>Eubacteriales</taxon>
        <taxon>Clostridiaceae</taxon>
        <taxon>Clostridium</taxon>
    </lineage>
</organism>
<evidence type="ECO:0000255" key="1">
    <source>
        <dbReference type="HAMAP-Rule" id="MF_00309"/>
    </source>
</evidence>
<evidence type="ECO:0000305" key="2"/>
<proteinExistence type="inferred from homology"/>